<name>TRMD_AZOPC</name>
<proteinExistence type="inferred from homology"/>
<dbReference type="EC" id="2.1.1.228" evidence="1"/>
<dbReference type="EMBL" id="AP010656">
    <property type="protein sequence ID" value="BAG83303.1"/>
    <property type="molecule type" value="Genomic_DNA"/>
</dbReference>
<dbReference type="RefSeq" id="WP_012573064.1">
    <property type="nucleotide sequence ID" value="NC_011565.1"/>
</dbReference>
<dbReference type="SMR" id="B6YQ31"/>
<dbReference type="STRING" id="511995.CFPG_040"/>
<dbReference type="KEGG" id="aps:CFPG_040"/>
<dbReference type="eggNOG" id="COG0336">
    <property type="taxonomic scope" value="Bacteria"/>
</dbReference>
<dbReference type="HOGENOM" id="CLU_047363_0_1_10"/>
<dbReference type="OrthoDB" id="9807416at2"/>
<dbReference type="Proteomes" id="UP000000723">
    <property type="component" value="Chromosome"/>
</dbReference>
<dbReference type="GO" id="GO:0005829">
    <property type="term" value="C:cytosol"/>
    <property type="evidence" value="ECO:0007669"/>
    <property type="project" value="TreeGrafter"/>
</dbReference>
<dbReference type="GO" id="GO:0052906">
    <property type="term" value="F:tRNA (guanine(37)-N1)-methyltransferase activity"/>
    <property type="evidence" value="ECO:0007669"/>
    <property type="project" value="UniProtKB-UniRule"/>
</dbReference>
<dbReference type="GO" id="GO:0002939">
    <property type="term" value="P:tRNA N1-guanine methylation"/>
    <property type="evidence" value="ECO:0007669"/>
    <property type="project" value="TreeGrafter"/>
</dbReference>
<dbReference type="CDD" id="cd18080">
    <property type="entry name" value="TrmD-like"/>
    <property type="match status" value="1"/>
</dbReference>
<dbReference type="FunFam" id="3.40.1280.10:FF:000001">
    <property type="entry name" value="tRNA (guanine-N(1)-)-methyltransferase"/>
    <property type="match status" value="1"/>
</dbReference>
<dbReference type="Gene3D" id="3.40.1280.10">
    <property type="match status" value="1"/>
</dbReference>
<dbReference type="Gene3D" id="1.10.1270.20">
    <property type="entry name" value="tRNA(m1g37)methyltransferase, domain 2"/>
    <property type="match status" value="1"/>
</dbReference>
<dbReference type="HAMAP" id="MF_00605">
    <property type="entry name" value="TrmD"/>
    <property type="match status" value="1"/>
</dbReference>
<dbReference type="InterPro" id="IPR029028">
    <property type="entry name" value="Alpha/beta_knot_MTases"/>
</dbReference>
<dbReference type="InterPro" id="IPR023148">
    <property type="entry name" value="tRNA_m1G_MeTrfase_C_sf"/>
</dbReference>
<dbReference type="InterPro" id="IPR002649">
    <property type="entry name" value="tRNA_m1G_MeTrfase_TrmD"/>
</dbReference>
<dbReference type="InterPro" id="IPR029026">
    <property type="entry name" value="tRNA_m1G_MTases_N"/>
</dbReference>
<dbReference type="InterPro" id="IPR016009">
    <property type="entry name" value="tRNA_MeTrfase_TRMD/TRM10"/>
</dbReference>
<dbReference type="NCBIfam" id="NF000648">
    <property type="entry name" value="PRK00026.1"/>
    <property type="match status" value="1"/>
</dbReference>
<dbReference type="NCBIfam" id="TIGR00088">
    <property type="entry name" value="trmD"/>
    <property type="match status" value="1"/>
</dbReference>
<dbReference type="PANTHER" id="PTHR46417">
    <property type="entry name" value="TRNA (GUANINE-N(1)-)-METHYLTRANSFERASE"/>
    <property type="match status" value="1"/>
</dbReference>
<dbReference type="PANTHER" id="PTHR46417:SF1">
    <property type="entry name" value="TRNA (GUANINE-N(1)-)-METHYLTRANSFERASE"/>
    <property type="match status" value="1"/>
</dbReference>
<dbReference type="Pfam" id="PF01746">
    <property type="entry name" value="tRNA_m1G_MT"/>
    <property type="match status" value="1"/>
</dbReference>
<dbReference type="PIRSF" id="PIRSF000386">
    <property type="entry name" value="tRNA_mtase"/>
    <property type="match status" value="1"/>
</dbReference>
<dbReference type="SUPFAM" id="SSF75217">
    <property type="entry name" value="alpha/beta knot"/>
    <property type="match status" value="1"/>
</dbReference>
<sequence length="222" mass="25406">MRIDIISVLPKIIESPFKHSILKRAQEKRLVEIYIHSLREYSTDKHHRVDDYPFGGGSGMVLQCEPIDRAISSLQLQRNYDEIIYTSPDGETFNQQIANDLSICYNLIILCGHYKGIDYRIREHLITREISIGDYVLTGGELAAVVICDTIVRLIPGVINDEQSALSDSFQDNLLAPPIYTRPSNYKGWIVPDILLSGHKAKIKDWELQQSIDRTKRLRPDL</sequence>
<feature type="chain" id="PRO_1000130130" description="tRNA (guanine-N(1)-)-methyltransferase">
    <location>
        <begin position="1"/>
        <end position="222"/>
    </location>
</feature>
<feature type="binding site" evidence="1">
    <location>
        <position position="112"/>
    </location>
    <ligand>
        <name>S-adenosyl-L-methionine</name>
        <dbReference type="ChEBI" id="CHEBI:59789"/>
    </ligand>
</feature>
<feature type="binding site" evidence="1">
    <location>
        <begin position="132"/>
        <end position="137"/>
    </location>
    <ligand>
        <name>S-adenosyl-L-methionine</name>
        <dbReference type="ChEBI" id="CHEBI:59789"/>
    </ligand>
</feature>
<accession>B6YQ31</accession>
<keyword id="KW-0963">Cytoplasm</keyword>
<keyword id="KW-0489">Methyltransferase</keyword>
<keyword id="KW-1185">Reference proteome</keyword>
<keyword id="KW-0949">S-adenosyl-L-methionine</keyword>
<keyword id="KW-0808">Transferase</keyword>
<keyword id="KW-0819">tRNA processing</keyword>
<protein>
    <recommendedName>
        <fullName evidence="1">tRNA (guanine-N(1)-)-methyltransferase</fullName>
        <ecNumber evidence="1">2.1.1.228</ecNumber>
    </recommendedName>
    <alternativeName>
        <fullName evidence="1">M1G-methyltransferase</fullName>
    </alternativeName>
    <alternativeName>
        <fullName evidence="1">tRNA [GM37] methyltransferase</fullName>
    </alternativeName>
</protein>
<evidence type="ECO:0000255" key="1">
    <source>
        <dbReference type="HAMAP-Rule" id="MF_00605"/>
    </source>
</evidence>
<organism>
    <name type="scientific">Azobacteroides pseudotrichonymphae genomovar. CFP2</name>
    <dbReference type="NCBI Taxonomy" id="511995"/>
    <lineage>
        <taxon>Bacteria</taxon>
        <taxon>Pseudomonadati</taxon>
        <taxon>Bacteroidota</taxon>
        <taxon>Bacteroidia</taxon>
        <taxon>Bacteroidales</taxon>
        <taxon>Candidatus Azobacteroides</taxon>
    </lineage>
</organism>
<reference key="1">
    <citation type="journal article" date="2008" name="Science">
        <title>Genome of an endosymbiont coupling N2 fixation to cellulolysis within RT protist cells in termite gut.</title>
        <authorList>
            <person name="Hongoh Y."/>
            <person name="Sharma V.K."/>
            <person name="Prakash T."/>
            <person name="Noda S."/>
            <person name="Toh H."/>
            <person name="Taylor T.D."/>
            <person name="Kudo T."/>
            <person name="Sakaki Y."/>
            <person name="Toyoda A."/>
            <person name="Hattori M."/>
            <person name="Ohkuma M."/>
        </authorList>
    </citation>
    <scope>NUCLEOTIDE SEQUENCE [LARGE SCALE GENOMIC DNA]</scope>
</reference>
<gene>
    <name evidence="1" type="primary">trmD</name>
    <name type="ordered locus">CFPG_040</name>
</gene>
<comment type="function">
    <text evidence="1">Specifically methylates guanosine-37 in various tRNAs.</text>
</comment>
<comment type="catalytic activity">
    <reaction evidence="1">
        <text>guanosine(37) in tRNA + S-adenosyl-L-methionine = N(1)-methylguanosine(37) in tRNA + S-adenosyl-L-homocysteine + H(+)</text>
        <dbReference type="Rhea" id="RHEA:36899"/>
        <dbReference type="Rhea" id="RHEA-COMP:10145"/>
        <dbReference type="Rhea" id="RHEA-COMP:10147"/>
        <dbReference type="ChEBI" id="CHEBI:15378"/>
        <dbReference type="ChEBI" id="CHEBI:57856"/>
        <dbReference type="ChEBI" id="CHEBI:59789"/>
        <dbReference type="ChEBI" id="CHEBI:73542"/>
        <dbReference type="ChEBI" id="CHEBI:74269"/>
        <dbReference type="EC" id="2.1.1.228"/>
    </reaction>
</comment>
<comment type="subunit">
    <text evidence="1">Homodimer.</text>
</comment>
<comment type="subcellular location">
    <subcellularLocation>
        <location evidence="1">Cytoplasm</location>
    </subcellularLocation>
</comment>
<comment type="similarity">
    <text evidence="1">Belongs to the RNA methyltransferase TrmD family.</text>
</comment>